<organism>
    <name type="scientific">Deinococcus geothermalis (strain DSM 11300 / CIP 105573 / AG-3a)</name>
    <dbReference type="NCBI Taxonomy" id="319795"/>
    <lineage>
        <taxon>Bacteria</taxon>
        <taxon>Thermotogati</taxon>
        <taxon>Deinococcota</taxon>
        <taxon>Deinococci</taxon>
        <taxon>Deinococcales</taxon>
        <taxon>Deinococcaceae</taxon>
        <taxon>Deinococcus</taxon>
    </lineage>
</organism>
<accession>Q1IWM3</accession>
<feature type="chain" id="PRO_0000263920" description="Argininosuccinate synthase">
    <location>
        <begin position="1"/>
        <end position="414"/>
    </location>
</feature>
<feature type="binding site" evidence="1">
    <location>
        <begin position="15"/>
        <end position="23"/>
    </location>
    <ligand>
        <name>ATP</name>
        <dbReference type="ChEBI" id="CHEBI:30616"/>
    </ligand>
</feature>
<feature type="binding site" evidence="1">
    <location>
        <position position="42"/>
    </location>
    <ligand>
        <name>ATP</name>
        <dbReference type="ChEBI" id="CHEBI:30616"/>
    </ligand>
</feature>
<feature type="binding site" evidence="1">
    <location>
        <position position="93"/>
    </location>
    <ligand>
        <name>L-citrulline</name>
        <dbReference type="ChEBI" id="CHEBI:57743"/>
    </ligand>
</feature>
<feature type="binding site" evidence="1">
    <location>
        <position position="98"/>
    </location>
    <ligand>
        <name>L-citrulline</name>
        <dbReference type="ChEBI" id="CHEBI:57743"/>
    </ligand>
</feature>
<feature type="binding site" evidence="1">
    <location>
        <position position="123"/>
    </location>
    <ligand>
        <name>ATP</name>
        <dbReference type="ChEBI" id="CHEBI:30616"/>
    </ligand>
</feature>
<feature type="binding site" evidence="1">
    <location>
        <position position="125"/>
    </location>
    <ligand>
        <name>L-aspartate</name>
        <dbReference type="ChEBI" id="CHEBI:29991"/>
    </ligand>
</feature>
<feature type="binding site" evidence="1">
    <location>
        <position position="129"/>
    </location>
    <ligand>
        <name>L-aspartate</name>
        <dbReference type="ChEBI" id="CHEBI:29991"/>
    </ligand>
</feature>
<feature type="binding site" evidence="1">
    <location>
        <position position="129"/>
    </location>
    <ligand>
        <name>L-citrulline</name>
        <dbReference type="ChEBI" id="CHEBI:57743"/>
    </ligand>
</feature>
<feature type="binding site" evidence="1">
    <location>
        <position position="130"/>
    </location>
    <ligand>
        <name>L-aspartate</name>
        <dbReference type="ChEBI" id="CHEBI:29991"/>
    </ligand>
</feature>
<feature type="binding site" evidence="1">
    <location>
        <position position="133"/>
    </location>
    <ligand>
        <name>L-citrulline</name>
        <dbReference type="ChEBI" id="CHEBI:57743"/>
    </ligand>
</feature>
<feature type="binding site" evidence="1">
    <location>
        <position position="182"/>
    </location>
    <ligand>
        <name>L-citrulline</name>
        <dbReference type="ChEBI" id="CHEBI:57743"/>
    </ligand>
</feature>
<feature type="binding site" evidence="1">
    <location>
        <position position="191"/>
    </location>
    <ligand>
        <name>L-citrulline</name>
        <dbReference type="ChEBI" id="CHEBI:57743"/>
    </ligand>
</feature>
<feature type="binding site" evidence="1">
    <location>
        <position position="267"/>
    </location>
    <ligand>
        <name>L-citrulline</name>
        <dbReference type="ChEBI" id="CHEBI:57743"/>
    </ligand>
</feature>
<feature type="binding site" evidence="1">
    <location>
        <position position="279"/>
    </location>
    <ligand>
        <name>L-citrulline</name>
        <dbReference type="ChEBI" id="CHEBI:57743"/>
    </ligand>
</feature>
<comment type="catalytic activity">
    <reaction evidence="1">
        <text>L-citrulline + L-aspartate + ATP = 2-(N(omega)-L-arginino)succinate + AMP + diphosphate + H(+)</text>
        <dbReference type="Rhea" id="RHEA:10932"/>
        <dbReference type="ChEBI" id="CHEBI:15378"/>
        <dbReference type="ChEBI" id="CHEBI:29991"/>
        <dbReference type="ChEBI" id="CHEBI:30616"/>
        <dbReference type="ChEBI" id="CHEBI:33019"/>
        <dbReference type="ChEBI" id="CHEBI:57472"/>
        <dbReference type="ChEBI" id="CHEBI:57743"/>
        <dbReference type="ChEBI" id="CHEBI:456215"/>
        <dbReference type="EC" id="6.3.4.5"/>
    </reaction>
</comment>
<comment type="pathway">
    <text evidence="1">Amino-acid biosynthesis; L-arginine biosynthesis; L-arginine from L-ornithine and carbamoyl phosphate: step 2/3.</text>
</comment>
<comment type="subunit">
    <text evidence="1">Homotetramer.</text>
</comment>
<comment type="subcellular location">
    <subcellularLocation>
        <location evidence="1">Cytoplasm</location>
    </subcellularLocation>
</comment>
<comment type="similarity">
    <text evidence="1">Belongs to the argininosuccinate synthase family. Type 1 subfamily.</text>
</comment>
<protein>
    <recommendedName>
        <fullName evidence="1">Argininosuccinate synthase</fullName>
        <ecNumber evidence="1">6.3.4.5</ecNumber>
    </recommendedName>
    <alternativeName>
        <fullName evidence="1">Citrulline--aspartate ligase</fullName>
    </alternativeName>
</protein>
<sequence length="414" mass="45975">MANVQQGQKDKIVLAYSGGLDTSIILKWLQTERNYDVVTFTADLGQGDEVEEARVKALNTGAVAAYALDLREEFVRDYVFPMFRAAALYEGYYLLGTSIARPLIAKKLVEIAEKEGAVAVSHGATGKGNDQVRFEMTAYALKPDIVTVAPWRDWDFQGRADLETFAREHGIPVPTTKKDPWSTDANLLHISYEGGILEDPWAEPPAHMFKLTVSPEEAPDQPEYVEVEFENGDPVAIGGERLSPAALLAKANEIGGRNGVGRIDLVENRFVGMKSRGVYETPGGTLLYHARRAVESLTLDREVLHQRDALAPKYAELVYNGFWFAPEREALQVYIDHVARSVTGTARLKLYKGNCTVVGRRAPRSLYDKDLVSFEAGGDYNQHDAGAFIKLNALRMRVQARVDAKRTQQEVARV</sequence>
<evidence type="ECO:0000255" key="1">
    <source>
        <dbReference type="HAMAP-Rule" id="MF_00005"/>
    </source>
</evidence>
<gene>
    <name evidence="1" type="primary">argG</name>
    <name type="ordered locus">Dgeo_2067</name>
</gene>
<proteinExistence type="inferred from homology"/>
<reference key="1">
    <citation type="submission" date="2006-04" db="EMBL/GenBank/DDBJ databases">
        <title>Complete sequence of chromosome of Deinococcus geothermalis DSM 11300.</title>
        <authorList>
            <person name="Copeland A."/>
            <person name="Lucas S."/>
            <person name="Lapidus A."/>
            <person name="Barry K."/>
            <person name="Detter J.C."/>
            <person name="Glavina del Rio T."/>
            <person name="Hammon N."/>
            <person name="Israni S."/>
            <person name="Dalin E."/>
            <person name="Tice H."/>
            <person name="Pitluck S."/>
            <person name="Brettin T."/>
            <person name="Bruce D."/>
            <person name="Han C."/>
            <person name="Tapia R."/>
            <person name="Saunders E."/>
            <person name="Gilna P."/>
            <person name="Schmutz J."/>
            <person name="Larimer F."/>
            <person name="Land M."/>
            <person name="Hauser L."/>
            <person name="Kyrpides N."/>
            <person name="Kim E."/>
            <person name="Daly M.J."/>
            <person name="Fredrickson J.K."/>
            <person name="Makarova K.S."/>
            <person name="Gaidamakova E.K."/>
            <person name="Zhai M."/>
            <person name="Richardson P."/>
        </authorList>
    </citation>
    <scope>NUCLEOTIDE SEQUENCE [LARGE SCALE GENOMIC DNA]</scope>
    <source>
        <strain>DSM 11300 / CIP 105573 / AG-3a</strain>
    </source>
</reference>
<dbReference type="EC" id="6.3.4.5" evidence="1"/>
<dbReference type="EMBL" id="CP000359">
    <property type="protein sequence ID" value="ABF46361.1"/>
    <property type="molecule type" value="Genomic_DNA"/>
</dbReference>
<dbReference type="RefSeq" id="WP_011531187.1">
    <property type="nucleotide sequence ID" value="NC_008025.1"/>
</dbReference>
<dbReference type="SMR" id="Q1IWM3"/>
<dbReference type="STRING" id="319795.Dgeo_2067"/>
<dbReference type="KEGG" id="dge:Dgeo_2067"/>
<dbReference type="eggNOG" id="COG0137">
    <property type="taxonomic scope" value="Bacteria"/>
</dbReference>
<dbReference type="HOGENOM" id="CLU_032784_4_2_0"/>
<dbReference type="UniPathway" id="UPA00068">
    <property type="reaction ID" value="UER00113"/>
</dbReference>
<dbReference type="Proteomes" id="UP000002431">
    <property type="component" value="Chromosome"/>
</dbReference>
<dbReference type="GO" id="GO:0005737">
    <property type="term" value="C:cytoplasm"/>
    <property type="evidence" value="ECO:0007669"/>
    <property type="project" value="UniProtKB-SubCell"/>
</dbReference>
<dbReference type="GO" id="GO:0004055">
    <property type="term" value="F:argininosuccinate synthase activity"/>
    <property type="evidence" value="ECO:0007669"/>
    <property type="project" value="UniProtKB-UniRule"/>
</dbReference>
<dbReference type="GO" id="GO:0005524">
    <property type="term" value="F:ATP binding"/>
    <property type="evidence" value="ECO:0007669"/>
    <property type="project" value="UniProtKB-UniRule"/>
</dbReference>
<dbReference type="GO" id="GO:0000053">
    <property type="term" value="P:argininosuccinate metabolic process"/>
    <property type="evidence" value="ECO:0007669"/>
    <property type="project" value="TreeGrafter"/>
</dbReference>
<dbReference type="GO" id="GO:0006526">
    <property type="term" value="P:L-arginine biosynthetic process"/>
    <property type="evidence" value="ECO:0007669"/>
    <property type="project" value="UniProtKB-UniRule"/>
</dbReference>
<dbReference type="GO" id="GO:0000050">
    <property type="term" value="P:urea cycle"/>
    <property type="evidence" value="ECO:0007669"/>
    <property type="project" value="TreeGrafter"/>
</dbReference>
<dbReference type="CDD" id="cd01999">
    <property type="entry name" value="ASS"/>
    <property type="match status" value="1"/>
</dbReference>
<dbReference type="FunFam" id="3.40.50.620:FF:000019">
    <property type="entry name" value="Argininosuccinate synthase"/>
    <property type="match status" value="1"/>
</dbReference>
<dbReference type="FunFam" id="3.90.1260.10:FF:000007">
    <property type="entry name" value="Argininosuccinate synthase"/>
    <property type="match status" value="1"/>
</dbReference>
<dbReference type="Gene3D" id="3.90.1260.10">
    <property type="entry name" value="Argininosuccinate synthetase, chain A, domain 2"/>
    <property type="match status" value="1"/>
</dbReference>
<dbReference type="Gene3D" id="3.40.50.620">
    <property type="entry name" value="HUPs"/>
    <property type="match status" value="1"/>
</dbReference>
<dbReference type="HAMAP" id="MF_00005">
    <property type="entry name" value="Arg_succ_synth_type1"/>
    <property type="match status" value="1"/>
</dbReference>
<dbReference type="InterPro" id="IPR048268">
    <property type="entry name" value="Arginosuc_syn_C"/>
</dbReference>
<dbReference type="InterPro" id="IPR048267">
    <property type="entry name" value="Arginosuc_syn_N"/>
</dbReference>
<dbReference type="InterPro" id="IPR001518">
    <property type="entry name" value="Arginosuc_synth"/>
</dbReference>
<dbReference type="InterPro" id="IPR018223">
    <property type="entry name" value="Arginosuc_synth_CS"/>
</dbReference>
<dbReference type="InterPro" id="IPR023434">
    <property type="entry name" value="Arginosuc_synth_type_1_subfam"/>
</dbReference>
<dbReference type="InterPro" id="IPR024074">
    <property type="entry name" value="AS_cat/multimer_dom_body"/>
</dbReference>
<dbReference type="InterPro" id="IPR014729">
    <property type="entry name" value="Rossmann-like_a/b/a_fold"/>
</dbReference>
<dbReference type="NCBIfam" id="TIGR00032">
    <property type="entry name" value="argG"/>
    <property type="match status" value="1"/>
</dbReference>
<dbReference type="NCBIfam" id="NF001770">
    <property type="entry name" value="PRK00509.1"/>
    <property type="match status" value="1"/>
</dbReference>
<dbReference type="PANTHER" id="PTHR11587">
    <property type="entry name" value="ARGININOSUCCINATE SYNTHASE"/>
    <property type="match status" value="1"/>
</dbReference>
<dbReference type="PANTHER" id="PTHR11587:SF2">
    <property type="entry name" value="ARGININOSUCCINATE SYNTHASE"/>
    <property type="match status" value="1"/>
</dbReference>
<dbReference type="Pfam" id="PF20979">
    <property type="entry name" value="Arginosuc_syn_C"/>
    <property type="match status" value="1"/>
</dbReference>
<dbReference type="Pfam" id="PF00764">
    <property type="entry name" value="Arginosuc_synth"/>
    <property type="match status" value="1"/>
</dbReference>
<dbReference type="SUPFAM" id="SSF52402">
    <property type="entry name" value="Adenine nucleotide alpha hydrolases-like"/>
    <property type="match status" value="1"/>
</dbReference>
<dbReference type="SUPFAM" id="SSF69864">
    <property type="entry name" value="Argininosuccinate synthetase, C-terminal domain"/>
    <property type="match status" value="1"/>
</dbReference>
<dbReference type="PROSITE" id="PS00564">
    <property type="entry name" value="ARGININOSUCCIN_SYN_1"/>
    <property type="match status" value="1"/>
</dbReference>
<dbReference type="PROSITE" id="PS00565">
    <property type="entry name" value="ARGININOSUCCIN_SYN_2"/>
    <property type="match status" value="1"/>
</dbReference>
<keyword id="KW-0028">Amino-acid biosynthesis</keyword>
<keyword id="KW-0055">Arginine biosynthesis</keyword>
<keyword id="KW-0067">ATP-binding</keyword>
<keyword id="KW-0963">Cytoplasm</keyword>
<keyword id="KW-0436">Ligase</keyword>
<keyword id="KW-0547">Nucleotide-binding</keyword>
<name>ASSY_DEIGD</name>